<sequence length="361" mass="43147">MVDSMEFFDREKEINYLVKVLSFEPNLIYFIYGPINSGKTTLIKHIIENKLDRDKYVVFYINLREHFISKYEDFIEVLFNTYEETFIEKLKKYLLSFINDLPKNIDVKSTILTGIPVPKNTLNEFLSTKNSENVFEYLTKIFEDIKKKGKQPILIIDELQKIGDLKINGFLIYELFNFFIDLTKEKHLCHVLCLSSDSLFIERVYNEGTLKDRCKYYLVDDFDYKTTKAFLKKHNFNDEEIDIVWHYFGGKPIKLVEAIQEKLLGEDVKEFCKKSLRVRKRQLKDLLYSLEDDNKELFERVIKLFENFKNRDEIFYEKISEEIVWTVKKNILFVNIEEGILKPQSKLDLLAIREILDEIKT</sequence>
<protein>
    <recommendedName>
        <fullName>Uncharacterized ATP-binding protein MJ1659</fullName>
    </recommendedName>
</protein>
<keyword id="KW-0067">ATP-binding</keyword>
<keyword id="KW-0547">Nucleotide-binding</keyword>
<keyword id="KW-1185">Reference proteome</keyword>
<gene>
    <name type="ordered locus">MJ1659</name>
</gene>
<reference key="1">
    <citation type="journal article" date="1996" name="Science">
        <title>Complete genome sequence of the methanogenic archaeon, Methanococcus jannaschii.</title>
        <authorList>
            <person name="Bult C.J."/>
            <person name="White O."/>
            <person name="Olsen G.J."/>
            <person name="Zhou L."/>
            <person name="Fleischmann R.D."/>
            <person name="Sutton G.G."/>
            <person name="Blake J.A."/>
            <person name="FitzGerald L.M."/>
            <person name="Clayton R.A."/>
            <person name="Gocayne J.D."/>
            <person name="Kerlavage A.R."/>
            <person name="Dougherty B.A."/>
            <person name="Tomb J.-F."/>
            <person name="Adams M.D."/>
            <person name="Reich C.I."/>
            <person name="Overbeek R."/>
            <person name="Kirkness E.F."/>
            <person name="Weinstock K.G."/>
            <person name="Merrick J.M."/>
            <person name="Glodek A."/>
            <person name="Scott J.L."/>
            <person name="Geoghagen N.S.M."/>
            <person name="Weidman J.F."/>
            <person name="Fuhrmann J.L."/>
            <person name="Nguyen D."/>
            <person name="Utterback T.R."/>
            <person name="Kelley J.M."/>
            <person name="Peterson J.D."/>
            <person name="Sadow P.W."/>
            <person name="Hanna M.C."/>
            <person name="Cotton M.D."/>
            <person name="Roberts K.M."/>
            <person name="Hurst M.A."/>
            <person name="Kaine B.P."/>
            <person name="Borodovsky M."/>
            <person name="Klenk H.-P."/>
            <person name="Fraser C.M."/>
            <person name="Smith H.O."/>
            <person name="Woese C.R."/>
            <person name="Venter J.C."/>
        </authorList>
    </citation>
    <scope>NUCLEOTIDE SEQUENCE [LARGE SCALE GENOMIC DNA]</scope>
    <source>
        <strain>ATCC 43067 / DSM 2661 / JAL-1 / JCM 10045 / NBRC 100440</strain>
    </source>
</reference>
<reference key="2">
    <citation type="journal article" date="1997" name="Science">
        <title>Evidence for a family of archaeal ATPases.</title>
        <authorList>
            <person name="Koonin E.V."/>
        </authorList>
    </citation>
    <scope>SIMILARITY</scope>
</reference>
<organism>
    <name type="scientific">Methanocaldococcus jannaschii (strain ATCC 43067 / DSM 2661 / JAL-1 / JCM 10045 / NBRC 100440)</name>
    <name type="common">Methanococcus jannaschii</name>
    <dbReference type="NCBI Taxonomy" id="243232"/>
    <lineage>
        <taxon>Archaea</taxon>
        <taxon>Methanobacteriati</taxon>
        <taxon>Methanobacteriota</taxon>
        <taxon>Methanomada group</taxon>
        <taxon>Methanococci</taxon>
        <taxon>Methanococcales</taxon>
        <taxon>Methanocaldococcaceae</taxon>
        <taxon>Methanocaldococcus</taxon>
    </lineage>
</organism>
<proteinExistence type="inferred from homology"/>
<comment type="similarity">
    <text evidence="2">Belongs to the archaeal ATPase family.</text>
</comment>
<name>Y1659_METJA</name>
<dbReference type="EMBL" id="L77117">
    <property type="protein sequence ID" value="AAB99686.1"/>
    <property type="molecule type" value="Genomic_DNA"/>
</dbReference>
<dbReference type="PIR" id="A64507">
    <property type="entry name" value="A64507"/>
</dbReference>
<dbReference type="SMR" id="Q59053"/>
<dbReference type="STRING" id="243232.MJ_1659"/>
<dbReference type="PaxDb" id="243232-MJ_1659"/>
<dbReference type="EnsemblBacteria" id="AAB99686">
    <property type="protein sequence ID" value="AAB99686"/>
    <property type="gene ID" value="MJ_1659"/>
</dbReference>
<dbReference type="KEGG" id="mja:MJ_1659"/>
<dbReference type="eggNOG" id="arCOG03407">
    <property type="taxonomic scope" value="Archaea"/>
</dbReference>
<dbReference type="HOGENOM" id="CLU_068608_0_0_2"/>
<dbReference type="InParanoid" id="Q59053"/>
<dbReference type="PhylomeDB" id="Q59053"/>
<dbReference type="Proteomes" id="UP000000805">
    <property type="component" value="Chromosome"/>
</dbReference>
<dbReference type="GO" id="GO:0005524">
    <property type="term" value="F:ATP binding"/>
    <property type="evidence" value="ECO:0007669"/>
    <property type="project" value="UniProtKB-KW"/>
</dbReference>
<dbReference type="GO" id="GO:0016887">
    <property type="term" value="F:ATP hydrolysis activity"/>
    <property type="evidence" value="ECO:0007669"/>
    <property type="project" value="InterPro"/>
</dbReference>
<dbReference type="CDD" id="cd00009">
    <property type="entry name" value="AAA"/>
    <property type="match status" value="1"/>
</dbReference>
<dbReference type="Gene3D" id="3.40.50.300">
    <property type="entry name" value="P-loop containing nucleotide triphosphate hydrolases"/>
    <property type="match status" value="1"/>
</dbReference>
<dbReference type="Gene3D" id="1.10.10.10">
    <property type="entry name" value="Winged helix-like DNA-binding domain superfamily/Winged helix DNA-binding domain"/>
    <property type="match status" value="1"/>
</dbReference>
<dbReference type="InterPro" id="IPR003593">
    <property type="entry name" value="AAA+_ATPase"/>
</dbReference>
<dbReference type="InterPro" id="IPR011579">
    <property type="entry name" value="ATPase_dom"/>
</dbReference>
<dbReference type="InterPro" id="IPR049081">
    <property type="entry name" value="MJ1010-like_2nd"/>
</dbReference>
<dbReference type="InterPro" id="IPR027417">
    <property type="entry name" value="P-loop_NTPase"/>
</dbReference>
<dbReference type="InterPro" id="IPR036388">
    <property type="entry name" value="WH-like_DNA-bd_sf"/>
</dbReference>
<dbReference type="PANTHER" id="PTHR34301:SF8">
    <property type="entry name" value="ATPASE DOMAIN-CONTAINING PROTEIN"/>
    <property type="match status" value="1"/>
</dbReference>
<dbReference type="PANTHER" id="PTHR34301">
    <property type="entry name" value="DNA-BINDING PROTEIN-RELATED"/>
    <property type="match status" value="1"/>
</dbReference>
<dbReference type="Pfam" id="PF01637">
    <property type="entry name" value="ATPase_2"/>
    <property type="match status" value="1"/>
</dbReference>
<dbReference type="Pfam" id="PF21690">
    <property type="entry name" value="MJ1010-like_2nd"/>
    <property type="match status" value="1"/>
</dbReference>
<dbReference type="SMART" id="SM00382">
    <property type="entry name" value="AAA"/>
    <property type="match status" value="1"/>
</dbReference>
<dbReference type="SUPFAM" id="SSF52540">
    <property type="entry name" value="P-loop containing nucleoside triphosphate hydrolases"/>
    <property type="match status" value="1"/>
</dbReference>
<feature type="chain" id="PRO_0000184677" description="Uncharacterized ATP-binding protein MJ1659">
    <location>
        <begin position="1"/>
        <end position="361"/>
    </location>
</feature>
<feature type="binding site" evidence="1">
    <location>
        <begin position="33"/>
        <end position="40"/>
    </location>
    <ligand>
        <name>ATP</name>
        <dbReference type="ChEBI" id="CHEBI:30616"/>
    </ligand>
</feature>
<accession>Q59053</accession>
<evidence type="ECO:0000255" key="1"/>
<evidence type="ECO:0000305" key="2"/>